<keyword id="KW-0460">Magnesium</keyword>
<keyword id="KW-0479">Metal-binding</keyword>
<keyword id="KW-0500">Molybdenum</keyword>
<keyword id="KW-0501">Molybdenum cofactor biosynthesis</keyword>
<keyword id="KW-1185">Reference proteome</keyword>
<keyword id="KW-0808">Transferase</keyword>
<sequence>MILSYSAAIELLLAEVAQLPLAIERVPLLETGDRLLAKDLAAPCDLPHWDNSAMDGFALRSQDVAAASPDRPVRLPVVGRVMAGEQPPLLANPTGVACAVMTGAPIPAGFDVIVKVEDVVQEENAIAVSTPIPAGQFIRRQGEDLRQGSPLLAKGQRLTPMALMLAAAVGMGELPVWSKLPVGLISTGTEVVPWSQPTLELGQIRNSSQPFLIEQLQRLGCEVRAIAHVPDDPEQFAAIAQQFWSQGVRLLLTTGAVSMGVADFVPAALERLGCQTIFHKVAIRPGKPLLFAIAPEHQGLVLACPGNPVSTTVTAEFFLKPLLMACRNEVRSPLWLPLAESVRKPEGLQCFWRSRLTPEGKVWVDPQQSSAALKSLVESTHWAILPAGQDFLAAGTPVEVRSL</sequence>
<reference key="1">
    <citation type="journal article" date="1998" name="J. Bacteriol.">
        <title>The narA locus of Synechococcus sp. strain PCC 7942 consists of a cluster of molybdopterin biosynthesis genes.</title>
        <authorList>
            <person name="Rubio L.M."/>
            <person name="Flores E."/>
            <person name="Herrero A."/>
        </authorList>
    </citation>
    <scope>NUCLEOTIDE SEQUENCE [GENOMIC DNA]</scope>
</reference>
<reference key="2">
    <citation type="submission" date="2005-08" db="EMBL/GenBank/DDBJ databases">
        <title>Complete sequence of chromosome 1 of Synechococcus elongatus PCC 7942.</title>
        <authorList>
            <consortium name="US DOE Joint Genome Institute"/>
            <person name="Copeland A."/>
            <person name="Lucas S."/>
            <person name="Lapidus A."/>
            <person name="Barry K."/>
            <person name="Detter J.C."/>
            <person name="Glavina T."/>
            <person name="Hammon N."/>
            <person name="Israni S."/>
            <person name="Pitluck S."/>
            <person name="Schmutz J."/>
            <person name="Larimer F."/>
            <person name="Land M."/>
            <person name="Kyrpides N."/>
            <person name="Lykidis A."/>
            <person name="Golden S."/>
            <person name="Richardson P."/>
        </authorList>
    </citation>
    <scope>NUCLEOTIDE SEQUENCE [LARGE SCALE GENOMIC DNA]</scope>
    <source>
        <strain>ATCC 33912 / PCC 7942 / FACHB-805</strain>
    </source>
</reference>
<feature type="chain" id="PRO_0000171002" description="Molybdopterin molybdenumtransferase">
    <location>
        <begin position="1"/>
        <end position="403"/>
    </location>
</feature>
<evidence type="ECO:0000250" key="1"/>
<evidence type="ECO:0000305" key="2"/>
<name>MOEA_SYNE7</name>
<dbReference type="EC" id="2.10.1.1"/>
<dbReference type="EMBL" id="X99625">
    <property type="protein sequence ID" value="CAA67944.1"/>
    <property type="molecule type" value="Genomic_DNA"/>
</dbReference>
<dbReference type="EMBL" id="CP000100">
    <property type="protein sequence ID" value="ABB57316.1"/>
    <property type="molecule type" value="Genomic_DNA"/>
</dbReference>
<dbReference type="RefSeq" id="WP_011377960.1">
    <property type="nucleotide sequence ID" value="NZ_CP130602.1"/>
</dbReference>
<dbReference type="SMR" id="Q56207"/>
<dbReference type="STRING" id="1140.Synpcc7942_1286"/>
<dbReference type="PaxDb" id="1140-Synpcc7942_1286"/>
<dbReference type="GeneID" id="72430147"/>
<dbReference type="KEGG" id="syf:Synpcc7942_1286"/>
<dbReference type="eggNOG" id="COG0303">
    <property type="taxonomic scope" value="Bacteria"/>
</dbReference>
<dbReference type="HOGENOM" id="CLU_010186_7_2_3"/>
<dbReference type="OrthoDB" id="9804758at2"/>
<dbReference type="BioCyc" id="SYNEL:SYNPCC7942_1286-MONOMER"/>
<dbReference type="UniPathway" id="UPA00344"/>
<dbReference type="Proteomes" id="UP000889800">
    <property type="component" value="Chromosome"/>
</dbReference>
<dbReference type="GO" id="GO:0005829">
    <property type="term" value="C:cytosol"/>
    <property type="evidence" value="ECO:0007669"/>
    <property type="project" value="TreeGrafter"/>
</dbReference>
<dbReference type="GO" id="GO:0046872">
    <property type="term" value="F:metal ion binding"/>
    <property type="evidence" value="ECO:0007669"/>
    <property type="project" value="UniProtKB-KW"/>
</dbReference>
<dbReference type="GO" id="GO:0061599">
    <property type="term" value="F:molybdopterin molybdotransferase activity"/>
    <property type="evidence" value="ECO:0007669"/>
    <property type="project" value="UniProtKB-EC"/>
</dbReference>
<dbReference type="GO" id="GO:0006777">
    <property type="term" value="P:Mo-molybdopterin cofactor biosynthetic process"/>
    <property type="evidence" value="ECO:0007669"/>
    <property type="project" value="UniProtKB-KW"/>
</dbReference>
<dbReference type="CDD" id="cd00887">
    <property type="entry name" value="MoeA"/>
    <property type="match status" value="1"/>
</dbReference>
<dbReference type="Gene3D" id="3.40.980.10">
    <property type="entry name" value="MoaB/Mog-like domain"/>
    <property type="match status" value="1"/>
</dbReference>
<dbReference type="Gene3D" id="2.40.340.10">
    <property type="entry name" value="MoeA, C-terminal, domain IV"/>
    <property type="match status" value="1"/>
</dbReference>
<dbReference type="Gene3D" id="3.90.105.10">
    <property type="entry name" value="Molybdopterin biosynthesis moea protein, domain 2"/>
    <property type="match status" value="1"/>
</dbReference>
<dbReference type="Gene3D" id="2.170.190.11">
    <property type="entry name" value="Molybdopterin biosynthesis moea protein, domain 3"/>
    <property type="match status" value="1"/>
</dbReference>
<dbReference type="InterPro" id="IPR036425">
    <property type="entry name" value="MoaB/Mog-like_dom_sf"/>
</dbReference>
<dbReference type="InterPro" id="IPR001453">
    <property type="entry name" value="MoaB/Mog_dom"/>
</dbReference>
<dbReference type="InterPro" id="IPR008284">
    <property type="entry name" value="MoCF_biosynth_CS"/>
</dbReference>
<dbReference type="InterPro" id="IPR038987">
    <property type="entry name" value="MoeA-like"/>
</dbReference>
<dbReference type="InterPro" id="IPR005111">
    <property type="entry name" value="MoeA_C_domain_IV"/>
</dbReference>
<dbReference type="InterPro" id="IPR036688">
    <property type="entry name" value="MoeA_C_domain_IV_sf"/>
</dbReference>
<dbReference type="InterPro" id="IPR005110">
    <property type="entry name" value="MoeA_linker/N"/>
</dbReference>
<dbReference type="InterPro" id="IPR036135">
    <property type="entry name" value="MoeA_linker/N_sf"/>
</dbReference>
<dbReference type="PANTHER" id="PTHR10192:SF5">
    <property type="entry name" value="GEPHYRIN"/>
    <property type="match status" value="1"/>
</dbReference>
<dbReference type="PANTHER" id="PTHR10192">
    <property type="entry name" value="MOLYBDOPTERIN BIOSYNTHESIS PROTEIN"/>
    <property type="match status" value="1"/>
</dbReference>
<dbReference type="Pfam" id="PF00994">
    <property type="entry name" value="MoCF_biosynth"/>
    <property type="match status" value="1"/>
</dbReference>
<dbReference type="Pfam" id="PF03454">
    <property type="entry name" value="MoeA_C"/>
    <property type="match status" value="1"/>
</dbReference>
<dbReference type="Pfam" id="PF03453">
    <property type="entry name" value="MoeA_N"/>
    <property type="match status" value="1"/>
</dbReference>
<dbReference type="SMART" id="SM00852">
    <property type="entry name" value="MoCF_biosynth"/>
    <property type="match status" value="1"/>
</dbReference>
<dbReference type="SUPFAM" id="SSF63867">
    <property type="entry name" value="MoeA C-terminal domain-like"/>
    <property type="match status" value="1"/>
</dbReference>
<dbReference type="SUPFAM" id="SSF63882">
    <property type="entry name" value="MoeA N-terminal region -like"/>
    <property type="match status" value="1"/>
</dbReference>
<dbReference type="SUPFAM" id="SSF53218">
    <property type="entry name" value="Molybdenum cofactor biosynthesis proteins"/>
    <property type="match status" value="1"/>
</dbReference>
<dbReference type="PROSITE" id="PS01079">
    <property type="entry name" value="MOCF_BIOSYNTHESIS_2"/>
    <property type="match status" value="1"/>
</dbReference>
<comment type="function">
    <text evidence="1">Catalyzes the insertion of molybdate into adenylated molybdopterin with the concomitant release of AMP.</text>
</comment>
<comment type="catalytic activity">
    <reaction>
        <text>adenylyl-molybdopterin + molybdate = Mo-molybdopterin + AMP + H(+)</text>
        <dbReference type="Rhea" id="RHEA:35047"/>
        <dbReference type="ChEBI" id="CHEBI:15378"/>
        <dbReference type="ChEBI" id="CHEBI:36264"/>
        <dbReference type="ChEBI" id="CHEBI:62727"/>
        <dbReference type="ChEBI" id="CHEBI:71302"/>
        <dbReference type="ChEBI" id="CHEBI:456215"/>
        <dbReference type="EC" id="2.10.1.1"/>
    </reaction>
</comment>
<comment type="cofactor">
    <cofactor evidence="1">
        <name>Mg(2+)</name>
        <dbReference type="ChEBI" id="CHEBI:18420"/>
    </cofactor>
    <text evidence="1">Binds 1 Mg(2+) ion per subunit.</text>
</comment>
<comment type="pathway">
    <text>Cofactor biosynthesis; molybdopterin biosynthesis.</text>
</comment>
<comment type="similarity">
    <text evidence="2">Belongs to the MoeA family.</text>
</comment>
<gene>
    <name type="primary">moeA</name>
    <name type="ordered locus">Synpcc7942_1286</name>
</gene>
<protein>
    <recommendedName>
        <fullName>Molybdopterin molybdenumtransferase</fullName>
        <shortName>MPT Mo-transferase</shortName>
        <ecNumber>2.10.1.1</ecNumber>
    </recommendedName>
</protein>
<proteinExistence type="inferred from homology"/>
<organism>
    <name type="scientific">Synechococcus elongatus (strain ATCC 33912 / PCC 7942 / FACHB-805)</name>
    <name type="common">Anacystis nidulans R2</name>
    <dbReference type="NCBI Taxonomy" id="1140"/>
    <lineage>
        <taxon>Bacteria</taxon>
        <taxon>Bacillati</taxon>
        <taxon>Cyanobacteriota</taxon>
        <taxon>Cyanophyceae</taxon>
        <taxon>Synechococcales</taxon>
        <taxon>Synechococcaceae</taxon>
        <taxon>Synechococcus</taxon>
    </lineage>
</organism>
<accession>Q56207</accession>
<accession>Q31NQ3</accession>